<organism>
    <name type="scientific">Kluyveromyces lactis (strain ATCC 8585 / CBS 2359 / DSM 70799 / NBRC 1267 / NRRL Y-1140 / WM37)</name>
    <name type="common">Yeast</name>
    <name type="synonym">Candida sphaerica</name>
    <dbReference type="NCBI Taxonomy" id="284590"/>
    <lineage>
        <taxon>Eukaryota</taxon>
        <taxon>Fungi</taxon>
        <taxon>Dikarya</taxon>
        <taxon>Ascomycota</taxon>
        <taxon>Saccharomycotina</taxon>
        <taxon>Saccharomycetes</taxon>
        <taxon>Saccharomycetales</taxon>
        <taxon>Saccharomycetaceae</taxon>
        <taxon>Kluyveromyces</taxon>
    </lineage>
</organism>
<evidence type="ECO:0000250" key="1">
    <source>
        <dbReference type="UniProtKB" id="Q12367"/>
    </source>
</evidence>
<evidence type="ECO:0000250" key="2">
    <source>
        <dbReference type="UniProtKB" id="Q9H867"/>
    </source>
</evidence>
<evidence type="ECO:0000305" key="3"/>
<accession>Q6CQI9</accession>
<dbReference type="EC" id="2.1.1.-" evidence="1"/>
<dbReference type="EMBL" id="CR382124">
    <property type="protein sequence ID" value="CAH00896.1"/>
    <property type="molecule type" value="Genomic_DNA"/>
</dbReference>
<dbReference type="RefSeq" id="XP_453800.1">
    <property type="nucleotide sequence ID" value="XM_453800.1"/>
</dbReference>
<dbReference type="FunCoup" id="Q6CQI9">
    <property type="interactions" value="20"/>
</dbReference>
<dbReference type="STRING" id="284590.Q6CQI9"/>
<dbReference type="PaxDb" id="284590-Q6CQI9"/>
<dbReference type="KEGG" id="kla:KLLA0_D16753g"/>
<dbReference type="eggNOG" id="KOG1018">
    <property type="taxonomic scope" value="Eukaryota"/>
</dbReference>
<dbReference type="HOGENOM" id="CLU_051532_0_0_1"/>
<dbReference type="InParanoid" id="Q6CQI9"/>
<dbReference type="OMA" id="ACDTIYN"/>
<dbReference type="Proteomes" id="UP000000598">
    <property type="component" value="Chromosome D"/>
</dbReference>
<dbReference type="GO" id="GO:0005829">
    <property type="term" value="C:cytosol"/>
    <property type="evidence" value="ECO:0007669"/>
    <property type="project" value="TreeGrafter"/>
</dbReference>
<dbReference type="GO" id="GO:0032991">
    <property type="term" value="C:protein-containing complex"/>
    <property type="evidence" value="ECO:0007669"/>
    <property type="project" value="TreeGrafter"/>
</dbReference>
<dbReference type="GO" id="GO:0008757">
    <property type="term" value="F:S-adenosylmethionine-dependent methyltransferase activity"/>
    <property type="evidence" value="ECO:0007669"/>
    <property type="project" value="UniProtKB-ARBA"/>
</dbReference>
<dbReference type="GO" id="GO:0032259">
    <property type="term" value="P:methylation"/>
    <property type="evidence" value="ECO:0007669"/>
    <property type="project" value="UniProtKB-KW"/>
</dbReference>
<dbReference type="Gene3D" id="3.40.50.150">
    <property type="entry name" value="Vaccinia Virus protein VP39"/>
    <property type="match status" value="1"/>
</dbReference>
<dbReference type="InterPro" id="IPR019410">
    <property type="entry name" value="Methyltransf_16"/>
</dbReference>
<dbReference type="InterPro" id="IPR029063">
    <property type="entry name" value="SAM-dependent_MTases_sf"/>
</dbReference>
<dbReference type="PANTHER" id="PTHR14614">
    <property type="entry name" value="HEPATOCELLULAR CARCINOMA-ASSOCIATED ANTIGEN"/>
    <property type="match status" value="1"/>
</dbReference>
<dbReference type="PANTHER" id="PTHR14614:SF109">
    <property type="entry name" value="RIBOSOMAL LYSINE N-METHYLTRANSFERASE 5"/>
    <property type="match status" value="1"/>
</dbReference>
<dbReference type="Pfam" id="PF10294">
    <property type="entry name" value="Methyltransf_16"/>
    <property type="match status" value="1"/>
</dbReference>
<sequence>MELVLLDEETLYEYIFERYVELEANANDLSQDLGILSRNESELEIDIGPHRLVTRKKKAPERDEYTFSIHQNLTSLNSNRDNNNSTTGYVIWTTSTFILKWLLYNDNATIFTRGGVKDEVDITSIFQCQQDDKLRYVLELGTGTSPMFPIVFSNYVDKYVATDQKDILPRLKDNIQENQSECRRRLLKSNTIALDDLKRRTELECQIDIALLDWELFSGSKKSRNDPVLQCGPNFHLTIIAMDVIYNEYLIVPFLTTLESLFVWYTEQRVTVSALIGIQLRTQDVLEMFLEEAIIERQFIVHAVDEKELNKSRFILLHVNLP</sequence>
<gene>
    <name type="primary">RKM5</name>
    <name type="ordered locus">KLLA0D16753g</name>
</gene>
<reference key="1">
    <citation type="journal article" date="2004" name="Nature">
        <title>Genome evolution in yeasts.</title>
        <authorList>
            <person name="Dujon B."/>
            <person name="Sherman D."/>
            <person name="Fischer G."/>
            <person name="Durrens P."/>
            <person name="Casaregola S."/>
            <person name="Lafontaine I."/>
            <person name="de Montigny J."/>
            <person name="Marck C."/>
            <person name="Neuveglise C."/>
            <person name="Talla E."/>
            <person name="Goffard N."/>
            <person name="Frangeul L."/>
            <person name="Aigle M."/>
            <person name="Anthouard V."/>
            <person name="Babour A."/>
            <person name="Barbe V."/>
            <person name="Barnay S."/>
            <person name="Blanchin S."/>
            <person name="Beckerich J.-M."/>
            <person name="Beyne E."/>
            <person name="Bleykasten C."/>
            <person name="Boisrame A."/>
            <person name="Boyer J."/>
            <person name="Cattolico L."/>
            <person name="Confanioleri F."/>
            <person name="de Daruvar A."/>
            <person name="Despons L."/>
            <person name="Fabre E."/>
            <person name="Fairhead C."/>
            <person name="Ferry-Dumazet H."/>
            <person name="Groppi A."/>
            <person name="Hantraye F."/>
            <person name="Hennequin C."/>
            <person name="Jauniaux N."/>
            <person name="Joyet P."/>
            <person name="Kachouri R."/>
            <person name="Kerrest A."/>
            <person name="Koszul R."/>
            <person name="Lemaire M."/>
            <person name="Lesur I."/>
            <person name="Ma L."/>
            <person name="Muller H."/>
            <person name="Nicaud J.-M."/>
            <person name="Nikolski M."/>
            <person name="Oztas S."/>
            <person name="Ozier-Kalogeropoulos O."/>
            <person name="Pellenz S."/>
            <person name="Potier S."/>
            <person name="Richard G.-F."/>
            <person name="Straub M.-L."/>
            <person name="Suleau A."/>
            <person name="Swennen D."/>
            <person name="Tekaia F."/>
            <person name="Wesolowski-Louvel M."/>
            <person name="Westhof E."/>
            <person name="Wirth B."/>
            <person name="Zeniou-Meyer M."/>
            <person name="Zivanovic Y."/>
            <person name="Bolotin-Fukuhara M."/>
            <person name="Thierry A."/>
            <person name="Bouchier C."/>
            <person name="Caudron B."/>
            <person name="Scarpelli C."/>
            <person name="Gaillardin C."/>
            <person name="Weissenbach J."/>
            <person name="Wincker P."/>
            <person name="Souciet J.-L."/>
        </authorList>
    </citation>
    <scope>NUCLEOTIDE SEQUENCE [LARGE SCALE GENOMIC DNA]</scope>
    <source>
        <strain>ATCC 8585 / CBS 2359 / DSM 70799 / NBRC 1267 / NRRL Y-1140 / WM37</strain>
    </source>
</reference>
<keyword id="KW-0489">Methyltransferase</keyword>
<keyword id="KW-1185">Reference proteome</keyword>
<keyword id="KW-0949">S-adenosyl-L-methionine</keyword>
<keyword id="KW-0808">Transferase</keyword>
<proteinExistence type="inferred from homology"/>
<name>RKM5_KLULA</name>
<feature type="chain" id="PRO_0000411042" description="Ribosomal lysine N-methyltransferase 5">
    <location>
        <begin position="1"/>
        <end position="322"/>
    </location>
</feature>
<feature type="binding site" evidence="2">
    <location>
        <position position="92"/>
    </location>
    <ligand>
        <name>S-adenosyl-L-methionine</name>
        <dbReference type="ChEBI" id="CHEBI:59789"/>
    </ligand>
</feature>
<feature type="binding site" evidence="2">
    <location>
        <begin position="141"/>
        <end position="143"/>
    </location>
    <ligand>
        <name>S-adenosyl-L-methionine</name>
        <dbReference type="ChEBI" id="CHEBI:59789"/>
    </ligand>
</feature>
<feature type="binding site" evidence="2">
    <location>
        <position position="163"/>
    </location>
    <ligand>
        <name>S-adenosyl-L-methionine</name>
        <dbReference type="ChEBI" id="CHEBI:59789"/>
    </ligand>
</feature>
<feature type="binding site" evidence="2">
    <location>
        <position position="214"/>
    </location>
    <ligand>
        <name>S-adenosyl-L-methionine</name>
        <dbReference type="ChEBI" id="CHEBI:59789"/>
    </ligand>
</feature>
<feature type="binding site" evidence="2">
    <location>
        <position position="242"/>
    </location>
    <ligand>
        <name>S-adenosyl-L-methionine</name>
        <dbReference type="ChEBI" id="CHEBI:59789"/>
    </ligand>
</feature>
<comment type="function">
    <text evidence="1">S-adenosyl-L-methionine-dependent protein-lysine N-methyltransferase that methylates 60S ribosomal protein L1.</text>
</comment>
<comment type="similarity">
    <text evidence="3">Belongs to the class I-like SAM-binding methyltransferase superfamily. RKM5 family.</text>
</comment>
<protein>
    <recommendedName>
        <fullName evidence="1">Ribosomal lysine N-methyltransferase 5</fullName>
        <ecNumber evidence="1">2.1.1.-</ecNumber>
    </recommendedName>
</protein>